<protein>
    <recommendedName>
        <fullName evidence="1">RNA-binding protein Hfq</fullName>
    </recommendedName>
</protein>
<gene>
    <name evidence="1" type="primary">hfq</name>
    <name type="ordered locus">Mnod_6544</name>
</gene>
<dbReference type="EMBL" id="CP001349">
    <property type="protein sequence ID" value="ACL61313.1"/>
    <property type="molecule type" value="Genomic_DNA"/>
</dbReference>
<dbReference type="RefSeq" id="WP_012335600.1">
    <property type="nucleotide sequence ID" value="NC_011894.1"/>
</dbReference>
<dbReference type="SMR" id="B8IDE7"/>
<dbReference type="STRING" id="460265.Mnod_6544"/>
<dbReference type="KEGG" id="mno:Mnod_6544"/>
<dbReference type="eggNOG" id="COG1923">
    <property type="taxonomic scope" value="Bacteria"/>
</dbReference>
<dbReference type="HOGENOM" id="CLU_113688_0_0_5"/>
<dbReference type="OrthoDB" id="9799751at2"/>
<dbReference type="Proteomes" id="UP000008207">
    <property type="component" value="Chromosome"/>
</dbReference>
<dbReference type="GO" id="GO:0005829">
    <property type="term" value="C:cytosol"/>
    <property type="evidence" value="ECO:0007669"/>
    <property type="project" value="TreeGrafter"/>
</dbReference>
<dbReference type="GO" id="GO:0003723">
    <property type="term" value="F:RNA binding"/>
    <property type="evidence" value="ECO:0007669"/>
    <property type="project" value="UniProtKB-UniRule"/>
</dbReference>
<dbReference type="GO" id="GO:0006355">
    <property type="term" value="P:regulation of DNA-templated transcription"/>
    <property type="evidence" value="ECO:0007669"/>
    <property type="project" value="InterPro"/>
</dbReference>
<dbReference type="GO" id="GO:0043487">
    <property type="term" value="P:regulation of RNA stability"/>
    <property type="evidence" value="ECO:0007669"/>
    <property type="project" value="TreeGrafter"/>
</dbReference>
<dbReference type="GO" id="GO:0045974">
    <property type="term" value="P:regulation of translation, ncRNA-mediated"/>
    <property type="evidence" value="ECO:0007669"/>
    <property type="project" value="TreeGrafter"/>
</dbReference>
<dbReference type="CDD" id="cd01716">
    <property type="entry name" value="Hfq"/>
    <property type="match status" value="1"/>
</dbReference>
<dbReference type="FunFam" id="2.30.30.100:FF:000001">
    <property type="entry name" value="RNA-binding protein Hfq"/>
    <property type="match status" value="1"/>
</dbReference>
<dbReference type="Gene3D" id="2.30.30.100">
    <property type="match status" value="1"/>
</dbReference>
<dbReference type="HAMAP" id="MF_00436">
    <property type="entry name" value="Hfq"/>
    <property type="match status" value="1"/>
</dbReference>
<dbReference type="InterPro" id="IPR005001">
    <property type="entry name" value="Hfq"/>
</dbReference>
<dbReference type="InterPro" id="IPR010920">
    <property type="entry name" value="LSM_dom_sf"/>
</dbReference>
<dbReference type="InterPro" id="IPR047575">
    <property type="entry name" value="Sm"/>
</dbReference>
<dbReference type="NCBIfam" id="TIGR02383">
    <property type="entry name" value="Hfq"/>
    <property type="match status" value="1"/>
</dbReference>
<dbReference type="NCBIfam" id="NF001602">
    <property type="entry name" value="PRK00395.1"/>
    <property type="match status" value="1"/>
</dbReference>
<dbReference type="PANTHER" id="PTHR34772">
    <property type="entry name" value="RNA-BINDING PROTEIN HFQ"/>
    <property type="match status" value="1"/>
</dbReference>
<dbReference type="PANTHER" id="PTHR34772:SF1">
    <property type="entry name" value="RNA-BINDING PROTEIN HFQ"/>
    <property type="match status" value="1"/>
</dbReference>
<dbReference type="Pfam" id="PF17209">
    <property type="entry name" value="Hfq"/>
    <property type="match status" value="1"/>
</dbReference>
<dbReference type="SUPFAM" id="SSF50182">
    <property type="entry name" value="Sm-like ribonucleoproteins"/>
    <property type="match status" value="1"/>
</dbReference>
<dbReference type="PROSITE" id="PS52002">
    <property type="entry name" value="SM"/>
    <property type="match status" value="1"/>
</dbReference>
<reference key="1">
    <citation type="submission" date="2009-01" db="EMBL/GenBank/DDBJ databases">
        <title>Complete sequence of chromosome of Methylobacterium nodulans ORS 2060.</title>
        <authorList>
            <consortium name="US DOE Joint Genome Institute"/>
            <person name="Lucas S."/>
            <person name="Copeland A."/>
            <person name="Lapidus A."/>
            <person name="Glavina del Rio T."/>
            <person name="Dalin E."/>
            <person name="Tice H."/>
            <person name="Bruce D."/>
            <person name="Goodwin L."/>
            <person name="Pitluck S."/>
            <person name="Sims D."/>
            <person name="Brettin T."/>
            <person name="Detter J.C."/>
            <person name="Han C."/>
            <person name="Larimer F."/>
            <person name="Land M."/>
            <person name="Hauser L."/>
            <person name="Kyrpides N."/>
            <person name="Ivanova N."/>
            <person name="Marx C.J."/>
            <person name="Richardson P."/>
        </authorList>
    </citation>
    <scope>NUCLEOTIDE SEQUENCE [LARGE SCALE GENOMIC DNA]</scope>
    <source>
        <strain>LMG 21967 / CNCM I-2342 / ORS 2060</strain>
    </source>
</reference>
<feature type="chain" id="PRO_1000135037" description="RNA-binding protein Hfq">
    <location>
        <begin position="1"/>
        <end position="84"/>
    </location>
</feature>
<feature type="domain" description="Sm" evidence="2">
    <location>
        <begin position="11"/>
        <end position="71"/>
    </location>
</feature>
<proteinExistence type="inferred from homology"/>
<organism>
    <name type="scientific">Methylobacterium nodulans (strain LMG 21967 / CNCM I-2342 / ORS 2060)</name>
    <dbReference type="NCBI Taxonomy" id="460265"/>
    <lineage>
        <taxon>Bacteria</taxon>
        <taxon>Pseudomonadati</taxon>
        <taxon>Pseudomonadota</taxon>
        <taxon>Alphaproteobacteria</taxon>
        <taxon>Hyphomicrobiales</taxon>
        <taxon>Methylobacteriaceae</taxon>
        <taxon>Methylobacterium</taxon>
    </lineage>
</organism>
<accession>B8IDE7</accession>
<evidence type="ECO:0000255" key="1">
    <source>
        <dbReference type="HAMAP-Rule" id="MF_00436"/>
    </source>
</evidence>
<evidence type="ECO:0000255" key="2">
    <source>
        <dbReference type="PROSITE-ProRule" id="PRU01346"/>
    </source>
</evidence>
<sequence length="84" mass="9488">MAGERAQNLQDTFLNHVRKNKIPLTIFLVNGVKLQGVVTWFDNFCVLLRRDGHSQLVYKHAISTIMPGHPVQLFEQGEEGAEKG</sequence>
<keyword id="KW-1185">Reference proteome</keyword>
<keyword id="KW-0694">RNA-binding</keyword>
<keyword id="KW-0346">Stress response</keyword>
<name>HFQ_METNO</name>
<comment type="function">
    <text evidence="1">RNA chaperone that binds small regulatory RNA (sRNAs) and mRNAs to facilitate mRNA translational regulation in response to envelope stress, environmental stress and changes in metabolite concentrations. Also binds with high specificity to tRNAs.</text>
</comment>
<comment type="subunit">
    <text evidence="1">Homohexamer.</text>
</comment>
<comment type="similarity">
    <text evidence="1">Belongs to the Hfq family.</text>
</comment>